<reference key="1">
    <citation type="journal article" date="2001" name="Proc. Natl. Acad. Sci. U.S.A.">
        <title>Complete genomic sequence of Pasteurella multocida Pm70.</title>
        <authorList>
            <person name="May B.J."/>
            <person name="Zhang Q."/>
            <person name="Li L.L."/>
            <person name="Paustian M.L."/>
            <person name="Whittam T.S."/>
            <person name="Kapur V."/>
        </authorList>
    </citation>
    <scope>NUCLEOTIDE SEQUENCE [LARGE SCALE GENOMIC DNA]</scope>
    <source>
        <strain>Pm70</strain>
    </source>
</reference>
<protein>
    <recommendedName>
        <fullName evidence="2">Large ribosomal subunit protein bL35</fullName>
    </recommendedName>
    <alternativeName>
        <fullName evidence="4">50S ribosomal protein L35</fullName>
    </alternativeName>
</protein>
<evidence type="ECO:0000250" key="1"/>
<evidence type="ECO:0000255" key="2">
    <source>
        <dbReference type="HAMAP-Rule" id="MF_00514"/>
    </source>
</evidence>
<evidence type="ECO:0000256" key="3">
    <source>
        <dbReference type="SAM" id="MobiDB-lite"/>
    </source>
</evidence>
<evidence type="ECO:0000305" key="4"/>
<proteinExistence type="inferred from homology"/>
<dbReference type="EMBL" id="AE004439">
    <property type="protein sequence ID" value="AAK02687.1"/>
    <property type="molecule type" value="Genomic_DNA"/>
</dbReference>
<dbReference type="RefSeq" id="WP_005596065.1">
    <property type="nucleotide sequence ID" value="NC_002663.1"/>
</dbReference>
<dbReference type="SMR" id="P67916"/>
<dbReference type="STRING" id="272843.PM0603"/>
<dbReference type="EnsemblBacteria" id="AAK02687">
    <property type="protein sequence ID" value="AAK02687"/>
    <property type="gene ID" value="PM0603"/>
</dbReference>
<dbReference type="GeneID" id="93297699"/>
<dbReference type="KEGG" id="pmu:PM0603"/>
<dbReference type="HOGENOM" id="CLU_169643_1_1_6"/>
<dbReference type="Proteomes" id="UP000000809">
    <property type="component" value="Chromosome"/>
</dbReference>
<dbReference type="GO" id="GO:0022625">
    <property type="term" value="C:cytosolic large ribosomal subunit"/>
    <property type="evidence" value="ECO:0007669"/>
    <property type="project" value="TreeGrafter"/>
</dbReference>
<dbReference type="GO" id="GO:0003735">
    <property type="term" value="F:structural constituent of ribosome"/>
    <property type="evidence" value="ECO:0007669"/>
    <property type="project" value="InterPro"/>
</dbReference>
<dbReference type="GO" id="GO:0006412">
    <property type="term" value="P:translation"/>
    <property type="evidence" value="ECO:0007669"/>
    <property type="project" value="UniProtKB-UniRule"/>
</dbReference>
<dbReference type="FunFam" id="4.10.410.60:FF:000001">
    <property type="entry name" value="50S ribosomal protein L35"/>
    <property type="match status" value="1"/>
</dbReference>
<dbReference type="Gene3D" id="4.10.410.60">
    <property type="match status" value="1"/>
</dbReference>
<dbReference type="HAMAP" id="MF_00514">
    <property type="entry name" value="Ribosomal_bL35"/>
    <property type="match status" value="1"/>
</dbReference>
<dbReference type="InterPro" id="IPR001706">
    <property type="entry name" value="Ribosomal_bL35"/>
</dbReference>
<dbReference type="InterPro" id="IPR021137">
    <property type="entry name" value="Ribosomal_bL35-like"/>
</dbReference>
<dbReference type="InterPro" id="IPR018265">
    <property type="entry name" value="Ribosomal_bL35_CS"/>
</dbReference>
<dbReference type="InterPro" id="IPR037229">
    <property type="entry name" value="Ribosomal_bL35_sf"/>
</dbReference>
<dbReference type="NCBIfam" id="TIGR00001">
    <property type="entry name" value="rpmI_bact"/>
    <property type="match status" value="1"/>
</dbReference>
<dbReference type="PANTHER" id="PTHR33343">
    <property type="entry name" value="54S RIBOSOMAL PROTEIN BL35M"/>
    <property type="match status" value="1"/>
</dbReference>
<dbReference type="PANTHER" id="PTHR33343:SF1">
    <property type="entry name" value="LARGE RIBOSOMAL SUBUNIT PROTEIN BL35M"/>
    <property type="match status" value="1"/>
</dbReference>
<dbReference type="Pfam" id="PF01632">
    <property type="entry name" value="Ribosomal_L35p"/>
    <property type="match status" value="1"/>
</dbReference>
<dbReference type="PRINTS" id="PR00064">
    <property type="entry name" value="RIBOSOMALL35"/>
</dbReference>
<dbReference type="SUPFAM" id="SSF143034">
    <property type="entry name" value="L35p-like"/>
    <property type="match status" value="1"/>
</dbReference>
<dbReference type="PROSITE" id="PS00936">
    <property type="entry name" value="RIBOSOMAL_L35"/>
    <property type="match status" value="1"/>
</dbReference>
<sequence>MPKIKTVRGAAKRFKKTASGGFKRKQSHLRHILTKKTTKRKRHLRHKSMVAKADQVLVVACLPYA</sequence>
<keyword id="KW-1185">Reference proteome</keyword>
<keyword id="KW-0687">Ribonucleoprotein</keyword>
<keyword id="KW-0689">Ribosomal protein</keyword>
<gene>
    <name evidence="2" type="primary">rpmI</name>
    <name evidence="2" type="synonym">rpl35</name>
    <name type="ordered locus">PM0603</name>
</gene>
<comment type="similarity">
    <text evidence="2">Belongs to the bacterial ribosomal protein bL35 family.</text>
</comment>
<accession>P67916</accession>
<accession>P45519</accession>
<organism>
    <name type="scientific">Pasteurella multocida (strain Pm70)</name>
    <dbReference type="NCBI Taxonomy" id="272843"/>
    <lineage>
        <taxon>Bacteria</taxon>
        <taxon>Pseudomonadati</taxon>
        <taxon>Pseudomonadota</taxon>
        <taxon>Gammaproteobacteria</taxon>
        <taxon>Pasteurellales</taxon>
        <taxon>Pasteurellaceae</taxon>
        <taxon>Pasteurella</taxon>
    </lineage>
</organism>
<name>RL35_PASMU</name>
<feature type="initiator methionine" description="Removed" evidence="1">
    <location>
        <position position="1"/>
    </location>
</feature>
<feature type="chain" id="PRO_0000177395" description="Large ribosomal subunit protein bL35">
    <location>
        <begin position="2"/>
        <end position="65"/>
    </location>
</feature>
<feature type="region of interest" description="Disordered" evidence="3">
    <location>
        <begin position="1"/>
        <end position="26"/>
    </location>
</feature>
<feature type="compositionally biased region" description="Basic residues" evidence="3">
    <location>
        <begin position="10"/>
        <end position="26"/>
    </location>
</feature>